<comment type="catalytic activity">
    <reaction evidence="1">
        <text>tRNA(Gly) + glycine + ATP = glycyl-tRNA(Gly) + AMP + diphosphate</text>
        <dbReference type="Rhea" id="RHEA:16013"/>
        <dbReference type="Rhea" id="RHEA-COMP:9664"/>
        <dbReference type="Rhea" id="RHEA-COMP:9683"/>
        <dbReference type="ChEBI" id="CHEBI:30616"/>
        <dbReference type="ChEBI" id="CHEBI:33019"/>
        <dbReference type="ChEBI" id="CHEBI:57305"/>
        <dbReference type="ChEBI" id="CHEBI:78442"/>
        <dbReference type="ChEBI" id="CHEBI:78522"/>
        <dbReference type="ChEBI" id="CHEBI:456215"/>
        <dbReference type="EC" id="6.1.1.14"/>
    </reaction>
</comment>
<comment type="subunit">
    <text evidence="1">Tetramer of two alpha and two beta subunits.</text>
</comment>
<comment type="subcellular location">
    <subcellularLocation>
        <location evidence="1">Cytoplasm</location>
    </subcellularLocation>
</comment>
<comment type="similarity">
    <text evidence="1">Belongs to the class-II aminoacyl-tRNA synthetase family.</text>
</comment>
<gene>
    <name evidence="1" type="primary">glyS</name>
    <name type="ordered locus">SPs0395</name>
</gene>
<organism>
    <name type="scientific">Streptococcus pyogenes serotype M3 (strain SSI-1)</name>
    <dbReference type="NCBI Taxonomy" id="193567"/>
    <lineage>
        <taxon>Bacteria</taxon>
        <taxon>Bacillati</taxon>
        <taxon>Bacillota</taxon>
        <taxon>Bacilli</taxon>
        <taxon>Lactobacillales</taxon>
        <taxon>Streptococcaceae</taxon>
        <taxon>Streptococcus</taxon>
    </lineage>
</organism>
<evidence type="ECO:0000255" key="1">
    <source>
        <dbReference type="HAMAP-Rule" id="MF_00255"/>
    </source>
</evidence>
<feature type="chain" id="PRO_0000411609" description="Glycine--tRNA ligase beta subunit">
    <location>
        <begin position="1"/>
        <end position="679"/>
    </location>
</feature>
<accession>P0DG39</accession>
<accession>Q879I0</accession>
<accession>Q8K663</accession>
<name>SYGB_STRPQ</name>
<keyword id="KW-0030">Aminoacyl-tRNA synthetase</keyword>
<keyword id="KW-0067">ATP-binding</keyword>
<keyword id="KW-0963">Cytoplasm</keyword>
<keyword id="KW-0436">Ligase</keyword>
<keyword id="KW-0547">Nucleotide-binding</keyword>
<keyword id="KW-0648">Protein biosynthesis</keyword>
<dbReference type="EC" id="6.1.1.14" evidence="1"/>
<dbReference type="EMBL" id="BA000034">
    <property type="protein sequence ID" value="BAC63490.1"/>
    <property type="molecule type" value="Genomic_DNA"/>
</dbReference>
<dbReference type="RefSeq" id="WP_011054911.1">
    <property type="nucleotide sequence ID" value="NC_004606.1"/>
</dbReference>
<dbReference type="SMR" id="P0DG39"/>
<dbReference type="KEGG" id="sps:SPs0395"/>
<dbReference type="HOGENOM" id="CLU_007220_2_2_9"/>
<dbReference type="GO" id="GO:0005829">
    <property type="term" value="C:cytosol"/>
    <property type="evidence" value="ECO:0007669"/>
    <property type="project" value="TreeGrafter"/>
</dbReference>
<dbReference type="GO" id="GO:0005524">
    <property type="term" value="F:ATP binding"/>
    <property type="evidence" value="ECO:0007669"/>
    <property type="project" value="UniProtKB-UniRule"/>
</dbReference>
<dbReference type="GO" id="GO:0004820">
    <property type="term" value="F:glycine-tRNA ligase activity"/>
    <property type="evidence" value="ECO:0007669"/>
    <property type="project" value="UniProtKB-UniRule"/>
</dbReference>
<dbReference type="GO" id="GO:0006426">
    <property type="term" value="P:glycyl-tRNA aminoacylation"/>
    <property type="evidence" value="ECO:0007669"/>
    <property type="project" value="UniProtKB-UniRule"/>
</dbReference>
<dbReference type="HAMAP" id="MF_00255">
    <property type="entry name" value="Gly_tRNA_synth_beta"/>
    <property type="match status" value="1"/>
</dbReference>
<dbReference type="InterPro" id="IPR015944">
    <property type="entry name" value="Gly-tRNA-synth_bsu"/>
</dbReference>
<dbReference type="InterPro" id="IPR006194">
    <property type="entry name" value="Gly-tRNA-synth_heterodimer"/>
</dbReference>
<dbReference type="NCBIfam" id="TIGR00211">
    <property type="entry name" value="glyS"/>
    <property type="match status" value="1"/>
</dbReference>
<dbReference type="PANTHER" id="PTHR30075:SF2">
    <property type="entry name" value="GLYCINE--TRNA LIGASE, CHLOROPLASTIC_MITOCHONDRIAL 2"/>
    <property type="match status" value="1"/>
</dbReference>
<dbReference type="PANTHER" id="PTHR30075">
    <property type="entry name" value="GLYCYL-TRNA SYNTHETASE"/>
    <property type="match status" value="1"/>
</dbReference>
<dbReference type="Pfam" id="PF02092">
    <property type="entry name" value="tRNA_synt_2f"/>
    <property type="match status" value="1"/>
</dbReference>
<dbReference type="PRINTS" id="PR01045">
    <property type="entry name" value="TRNASYNTHGB"/>
</dbReference>
<dbReference type="SUPFAM" id="SSF109604">
    <property type="entry name" value="HD-domain/PDEase-like"/>
    <property type="match status" value="1"/>
</dbReference>
<dbReference type="PROSITE" id="PS50861">
    <property type="entry name" value="AA_TRNA_LIGASE_II_GLYAB"/>
    <property type="match status" value="1"/>
</dbReference>
<protein>
    <recommendedName>
        <fullName evidence="1">Glycine--tRNA ligase beta subunit</fullName>
        <ecNumber evidence="1">6.1.1.14</ecNumber>
    </recommendedName>
    <alternativeName>
        <fullName evidence="1">Glycyl-tRNA synthetase beta subunit</fullName>
        <shortName evidence="1">GlyRS</shortName>
    </alternativeName>
</protein>
<reference key="1">
    <citation type="journal article" date="2003" name="Genome Res.">
        <title>Genome sequence of an M3 strain of Streptococcus pyogenes reveals a large-scale genomic rearrangement in invasive strains and new insights into phage evolution.</title>
        <authorList>
            <person name="Nakagawa I."/>
            <person name="Kurokawa K."/>
            <person name="Yamashita A."/>
            <person name="Nakata M."/>
            <person name="Tomiyasu Y."/>
            <person name="Okahashi N."/>
            <person name="Kawabata S."/>
            <person name="Yamazaki K."/>
            <person name="Shiba T."/>
            <person name="Yasunaga T."/>
            <person name="Hayashi H."/>
            <person name="Hattori M."/>
            <person name="Hamada S."/>
        </authorList>
    </citation>
    <scope>NUCLEOTIDE SEQUENCE [LARGE SCALE GENOMIC DNA]</scope>
    <source>
        <strain>SSI-1</strain>
    </source>
</reference>
<sequence length="679" mass="74996">MSKNLLIELGLEELPAYVVTPSEKQLGERLATFLTENRLSFEDIQTFSTPRRLAVRVSGLAAQQTDLTEDFKGPAKKIALDADGNFSKAAQGFVRGKGLTTDAIEFREVKGEEYVYVTKHEAGKPAKEVLLGVTEVLSAMTFPVSMHWANNSFEYIRPVHTLTVLLNDEALELDFLDIHSGRVSRGHRFLGTETTITSADSYEADLRSQFVIADAKERQEMIVEQIKAIEAAQGVQVDIDADLLNEVLNLVEFPTAFMGSFDAKYLDVPEEVLVTSMKNHQRYFVVRDQEGHLMPNFVSVRNGNDQAIENVIKGNEKVLVARLEDGEFFWREDQKLQIADLVAKLTNVTFHEKIGSLAEHMDRTRVIAASLAKEANLSAEEVTAVDRAAQIYKFDLLTGMVGEFDELQGIMGEKYARLAGEDAAVATAIREHYLPDAAGGALPETKVGAVLALADKLDTLLSFFSVGLIPSGSNDPYALRRATQGIVRILDHFGWRIPMDKLVDSLYDLSFDSLTYANKADVMNFIRARVDKMMGKAVPKDIREAVLESSTFVVPEMLAAAEALVKASHTENYKPAVESLSRAFNLAEKADASVHVDPSLFENEQENTLFAAIQGLTLAGSAAQQLEQVFVLSPVINDFFDNTMVMAEDQALKNNRLAILSDLVSKAKTIAAFNQLNTK</sequence>
<proteinExistence type="inferred from homology"/>